<accession>W6QIT8</accession>
<reference key="1">
    <citation type="journal article" date="2014" name="Nat. Commun.">
        <title>Multiple recent horizontal transfers of a large genomic region in cheese making fungi.</title>
        <authorList>
            <person name="Cheeseman K."/>
            <person name="Ropars J."/>
            <person name="Renault P."/>
            <person name="Dupont J."/>
            <person name="Gouzy J."/>
            <person name="Branca A."/>
            <person name="Abraham A.-L."/>
            <person name="Ceppi M."/>
            <person name="Conseiller E."/>
            <person name="Debuchy R."/>
            <person name="Malagnac F."/>
            <person name="Goarin A."/>
            <person name="Silar P."/>
            <person name="Lacoste S."/>
            <person name="Sallet E."/>
            <person name="Bensimon A."/>
            <person name="Giraud T."/>
            <person name="Brygoo Y."/>
        </authorList>
    </citation>
    <scope>NUCLEOTIDE SEQUENCE [LARGE SCALE GENOMIC DNA]</scope>
    <source>
        <strain>FM164</strain>
    </source>
</reference>
<reference key="2">
    <citation type="journal article" date="2016" name="PLoS ONE">
        <title>Identification and functional analysis of the mycophenolic acid gene cluster of Penicillium roqueforti.</title>
        <authorList>
            <person name="Del-Cid A."/>
            <person name="Gil-Duran C."/>
            <person name="Vaca I."/>
            <person name="Rojas-Aedo J.F."/>
            <person name="Garcia-Rico R.O."/>
            <person name="Levican G."/>
            <person name="Chavez R."/>
        </authorList>
    </citation>
    <scope>FUNCTION</scope>
    <scope>DISRUPTION PHENOTYPE</scope>
    <scope>PATHWAY</scope>
</reference>
<feature type="chain" id="PRO_0000449212" description="Polyprenyl transferase mpaA">
    <location>
        <begin position="1"/>
        <end position="325"/>
    </location>
</feature>
<feature type="transmembrane region" description="Helical" evidence="3">
    <location>
        <begin position="27"/>
        <end position="47"/>
    </location>
</feature>
<feature type="transmembrane region" description="Helical" evidence="3">
    <location>
        <begin position="56"/>
        <end position="76"/>
    </location>
</feature>
<feature type="transmembrane region" description="Helical" evidence="3">
    <location>
        <begin position="108"/>
        <end position="128"/>
    </location>
</feature>
<feature type="transmembrane region" description="Helical" evidence="3">
    <location>
        <begin position="134"/>
        <end position="151"/>
    </location>
</feature>
<feature type="transmembrane region" description="Helical" evidence="3">
    <location>
        <begin position="159"/>
        <end position="179"/>
    </location>
</feature>
<feature type="transmembrane region" description="Helical" evidence="3">
    <location>
        <begin position="192"/>
        <end position="212"/>
    </location>
</feature>
<feature type="transmembrane region" description="Helical" evidence="3">
    <location>
        <begin position="240"/>
        <end position="260"/>
    </location>
</feature>
<feature type="transmembrane region" description="Helical" evidence="3">
    <location>
        <begin position="262"/>
        <end position="282"/>
    </location>
</feature>
<feature type="transmembrane region" description="Helical" evidence="3">
    <location>
        <begin position="295"/>
        <end position="315"/>
    </location>
</feature>
<feature type="glycosylation site" description="N-linked (GlcNAc...) asparagine" evidence="4">
    <location>
        <position position="131"/>
    </location>
</feature>
<keyword id="KW-0325">Glycoprotein</keyword>
<keyword id="KW-0333">Golgi apparatus</keyword>
<keyword id="KW-0472">Membrane</keyword>
<keyword id="KW-1185">Reference proteome</keyword>
<keyword id="KW-0808">Transferase</keyword>
<keyword id="KW-0812">Transmembrane</keyword>
<keyword id="KW-1133">Transmembrane helix</keyword>
<name>MPAA_PENRF</name>
<gene>
    <name evidence="6" type="primary">mpaA</name>
    <name type="ORF">PROQFM164_S05g000561</name>
</gene>
<protein>
    <recommendedName>
        <fullName evidence="6">Polyprenyl transferase mpaA</fullName>
        <ecNumber evidence="8">2.5.1.-</ecNumber>
    </recommendedName>
    <alternativeName>
        <fullName evidence="6">Mycophenolic acid biosynthesis cluster protein A</fullName>
    </alternativeName>
</protein>
<sequence length="325" mass="36985">MVGSMENPGSWGLACLLISTSRFNRYMPYYTMMAAVWSTLIAGALKLQEDPASLSVEYILFKAGLCFVHCLLLCGAGNTWNDLIDRDIDARVERTKMRPLASGKVSTVEALVWMVGQYFLSVKMLDLILDNRSIWGLMLPLTASIMLYPYLKRPVFSRVFIYPQYILGLAVAYPSITGWASINGQEQSMSEIFTHCTPICLLIFFWCLYFNTAYSHQDSVDDRKMNINSAYVVAGQRIRLFLAFLGALPLAVIPYVVLKINSPWLWFSWMAVWTVSIVMQIVRFDSKKLESGGRIHWDNFLLGLWTTVACIVEVGLQKVEFWNLI</sequence>
<dbReference type="EC" id="2.5.1.-" evidence="8"/>
<dbReference type="EMBL" id="HG792019">
    <property type="protein sequence ID" value="CDM36728.1"/>
    <property type="molecule type" value="Genomic_DNA"/>
</dbReference>
<dbReference type="SMR" id="W6QIT8"/>
<dbReference type="STRING" id="1365484.W6QIT8"/>
<dbReference type="GlyCosmos" id="W6QIT8">
    <property type="glycosylation" value="1 site, No reported glycans"/>
</dbReference>
<dbReference type="OMA" id="FTIAWPA"/>
<dbReference type="OrthoDB" id="18170at2759"/>
<dbReference type="UniPathway" id="UPA00213"/>
<dbReference type="Proteomes" id="UP000030686">
    <property type="component" value="Unassembled WGS sequence"/>
</dbReference>
<dbReference type="GO" id="GO:0005794">
    <property type="term" value="C:Golgi apparatus"/>
    <property type="evidence" value="ECO:0000250"/>
    <property type="project" value="GO_Central"/>
</dbReference>
<dbReference type="GO" id="GO:0000139">
    <property type="term" value="C:Golgi membrane"/>
    <property type="evidence" value="ECO:0007669"/>
    <property type="project" value="UniProtKB-SubCell"/>
</dbReference>
<dbReference type="GO" id="GO:0005886">
    <property type="term" value="C:plasma membrane"/>
    <property type="evidence" value="ECO:0007669"/>
    <property type="project" value="TreeGrafter"/>
</dbReference>
<dbReference type="GO" id="GO:0004659">
    <property type="term" value="F:prenyltransferase activity"/>
    <property type="evidence" value="ECO:0000315"/>
    <property type="project" value="GO_Central"/>
</dbReference>
<dbReference type="GO" id="GO:0140722">
    <property type="term" value="P:mycophenolic acid biosynthetic process"/>
    <property type="evidence" value="ECO:0000315"/>
    <property type="project" value="GO_Central"/>
</dbReference>
<dbReference type="GO" id="GO:0016114">
    <property type="term" value="P:terpenoid biosynthetic process"/>
    <property type="evidence" value="ECO:0007669"/>
    <property type="project" value="UniProtKB-UniPathway"/>
</dbReference>
<dbReference type="CDD" id="cd13959">
    <property type="entry name" value="PT_UbiA_COQ2"/>
    <property type="match status" value="1"/>
</dbReference>
<dbReference type="FunFam" id="1.10.357.140:FF:000008">
    <property type="entry name" value="4-hydroxybenzoate octaprenyltransferase"/>
    <property type="match status" value="1"/>
</dbReference>
<dbReference type="FunFam" id="1.20.120.1780:FF:000001">
    <property type="entry name" value="4-hydroxybenzoate octaprenyltransferase"/>
    <property type="match status" value="1"/>
</dbReference>
<dbReference type="Gene3D" id="1.10.357.140">
    <property type="entry name" value="UbiA prenyltransferase"/>
    <property type="match status" value="1"/>
</dbReference>
<dbReference type="Gene3D" id="1.20.120.1780">
    <property type="entry name" value="UbiA prenyltransferase"/>
    <property type="match status" value="1"/>
</dbReference>
<dbReference type="InterPro" id="IPR039653">
    <property type="entry name" value="Prenyltransferase"/>
</dbReference>
<dbReference type="InterPro" id="IPR000537">
    <property type="entry name" value="UbiA_prenyltransferase"/>
</dbReference>
<dbReference type="InterPro" id="IPR030470">
    <property type="entry name" value="UbiA_prenylTrfase_CS"/>
</dbReference>
<dbReference type="InterPro" id="IPR044878">
    <property type="entry name" value="UbiA_sf"/>
</dbReference>
<dbReference type="PANTHER" id="PTHR11048:SF28">
    <property type="entry name" value="4-HYDROXYBENZOATE POLYPRENYLTRANSFERASE, MITOCHONDRIAL"/>
    <property type="match status" value="1"/>
</dbReference>
<dbReference type="PANTHER" id="PTHR11048">
    <property type="entry name" value="PRENYLTRANSFERASES"/>
    <property type="match status" value="1"/>
</dbReference>
<dbReference type="Pfam" id="PF01040">
    <property type="entry name" value="UbiA"/>
    <property type="match status" value="1"/>
</dbReference>
<dbReference type="PROSITE" id="PS00943">
    <property type="entry name" value="UBIA"/>
    <property type="match status" value="1"/>
</dbReference>
<proteinExistence type="inferred from homology"/>
<organism>
    <name type="scientific">Penicillium roqueforti (strain FM164)</name>
    <dbReference type="NCBI Taxonomy" id="1365484"/>
    <lineage>
        <taxon>Eukaryota</taxon>
        <taxon>Fungi</taxon>
        <taxon>Dikarya</taxon>
        <taxon>Ascomycota</taxon>
        <taxon>Pezizomycotina</taxon>
        <taxon>Eurotiomycetes</taxon>
        <taxon>Eurotiomycetidae</taxon>
        <taxon>Eurotiales</taxon>
        <taxon>Aspergillaceae</taxon>
        <taxon>Penicillium</taxon>
    </lineage>
</organism>
<comment type="function">
    <text evidence="5 8">Polyprenyl transferase; part of the gene cluster that mediates the biosynthesis of mycophenolic acid (MPA), the first isolated antibiotic natural product in the world obtained from a culture of Penicillium brevicompactum in 1893 (PubMed:26751579). MpaA is a Golgi apparatus-associated enzyme that catalyzes the prenylation of 5,7-dihydroxy-4,6-dimethylphthalide (DHMP) to yield farnesyl-DHMP (FDHMP) (PubMed:26751579). The first step of the pathway is the synthesis of 5-methylorsellinic acid (5MOA) by the cytosolic polyketide synthase mpaC. 5MOA is then converted to the phthalide compound 5,7-dihydroxy-4,6-dimethylphthalide (DHMP) by the endoplasmic reticulum-bound cytochrome P450 monooxygenase mpaDE. MpaDE first catalyzes hydroxylation of 5-MOA to 4,6-dihydroxy-2-(hydroxymethyl)-3-methylbenzoic acid (DHMB). MpaDE then acts as a lactone synthase that catalyzes the ring closure to convert DHMB into DHMP. The next step is the prenylation of DHMP by the Golgi apparatus-associated prenyltransferase mpaA to yield farnesyl-DHMP (FDHMP). The ER-bound oxygenase mpaB then mediates the oxidative cleavage the C19-C20 double bond in FDHMP to yield FDHMP-3C via a mycophenolic aldehyde intermediate. The O-methyltransferase mpaG catalyzes the methylation of FDHMP-3C to yield MFDHMP-3C. After the cytosolic methylation of FDHMP-3C, MFDHMP-3C enters into peroxisomes probably via free diffusion due to its low molecular weight. Upon a peroxisomal CoA ligation reaction, catalyzed by a beta-oxidation component enzyme acyl-CoA ligase ACL891, MFDHMP-3C-CoA would then be restricted to peroxisomes for the following beta-oxidation pathway steps. The peroxisomal beta-oxidation machinery than converts MFDHMP-3C-CoA into MPA_CoA, via a beta-oxidation chain-shortening process. Finally mpaH acts as a peroxisomal acyl-CoA hydrolase with high substrate specificity toward MPA-CoA to release the final product MPA (Probable) (PubMed:26751579).</text>
</comment>
<comment type="catalytic activity">
    <reaction evidence="8">
        <text>5,7-dihydroxy-4-methylphthalide + (2E,6E)-farnesyl diphosphate = 4-farnesyl-3,5-dihydroxy-6-methylphthalide + diphosphate</text>
        <dbReference type="Rhea" id="RHEA:66676"/>
        <dbReference type="ChEBI" id="CHEBI:33019"/>
        <dbReference type="ChEBI" id="CHEBI:68194"/>
        <dbReference type="ChEBI" id="CHEBI:167386"/>
        <dbReference type="ChEBI" id="CHEBI:175763"/>
    </reaction>
    <physiologicalReaction direction="left-to-right" evidence="8">
        <dbReference type="Rhea" id="RHEA:66677"/>
    </physiologicalReaction>
</comment>
<comment type="cofactor">
    <cofactor evidence="2">
        <name>Mg(2+)</name>
        <dbReference type="ChEBI" id="CHEBI:18420"/>
    </cofactor>
</comment>
<comment type="pathway">
    <text evidence="5">Secondary metabolite biosynthesis; terpenoid biosynthesis.</text>
</comment>
<comment type="subcellular location">
    <subcellularLocation>
        <location evidence="1">Golgi apparatus membrane</location>
        <topology evidence="3">Multi-pass membrane protein</topology>
    </subcellularLocation>
    <text evidence="7">Membrane association is functionally relevant because mpaA must ostensibly interact with its membrane-embedded substrate FPP.</text>
</comment>
<comment type="disruption phenotype">
    <text evidence="5">Results in dramatic reduction in MPA production and leads to the accumulation of DHMP.</text>
</comment>
<comment type="similarity">
    <text evidence="7">Belongs to the UbiA prenyltransferase family.</text>
</comment>
<evidence type="ECO:0000250" key="1">
    <source>
        <dbReference type="UniProtKB" id="A0A0B5L778"/>
    </source>
</evidence>
<evidence type="ECO:0000250" key="2">
    <source>
        <dbReference type="UniProtKB" id="P32378"/>
    </source>
</evidence>
<evidence type="ECO:0000255" key="3"/>
<evidence type="ECO:0000255" key="4">
    <source>
        <dbReference type="PROSITE-ProRule" id="PRU00498"/>
    </source>
</evidence>
<evidence type="ECO:0000269" key="5">
    <source>
    </source>
</evidence>
<evidence type="ECO:0000303" key="6">
    <source>
    </source>
</evidence>
<evidence type="ECO:0000305" key="7"/>
<evidence type="ECO:0000305" key="8">
    <source>
    </source>
</evidence>